<evidence type="ECO:0000250" key="1">
    <source>
        <dbReference type="UniProtKB" id="Q9H892"/>
    </source>
</evidence>
<evidence type="ECO:0007744" key="2">
    <source>
    </source>
</evidence>
<organism>
    <name type="scientific">Mus musculus</name>
    <name type="common">Mouse</name>
    <dbReference type="NCBI Taxonomy" id="10090"/>
    <lineage>
        <taxon>Eukaryota</taxon>
        <taxon>Metazoa</taxon>
        <taxon>Chordata</taxon>
        <taxon>Craniata</taxon>
        <taxon>Vertebrata</taxon>
        <taxon>Euteleostomi</taxon>
        <taxon>Mammalia</taxon>
        <taxon>Eutheria</taxon>
        <taxon>Euarchontoglires</taxon>
        <taxon>Glires</taxon>
        <taxon>Rodentia</taxon>
        <taxon>Myomorpha</taxon>
        <taxon>Muroidea</taxon>
        <taxon>Muridae</taxon>
        <taxon>Murinae</taxon>
        <taxon>Mus</taxon>
        <taxon>Mus</taxon>
    </lineage>
</organism>
<accession>Q8BW49</accession>
<gene>
    <name type="primary">Ttc12</name>
</gene>
<feature type="chain" id="PRO_0000106397" description="Tetratricopeptide repeat protein 12">
    <location>
        <begin position="1"/>
        <end position="704"/>
    </location>
</feature>
<feature type="repeat" description="TPR 1">
    <location>
        <begin position="105"/>
        <end position="138"/>
    </location>
</feature>
<feature type="repeat" description="TPR 2">
    <location>
        <begin position="139"/>
        <end position="172"/>
    </location>
</feature>
<feature type="repeat" description="TPR 3">
    <location>
        <begin position="173"/>
        <end position="206"/>
    </location>
</feature>
<feature type="modified residue" description="Phosphothreonine" evidence="2">
    <location>
        <position position="71"/>
    </location>
</feature>
<name>TTC12_MOUSE</name>
<comment type="function">
    <text evidence="1">Cytoplasmic protein that plays a role in the proper assembly of dynein arm complexes in motile cilia in both respiratory cells and sperm flagella.</text>
</comment>
<comment type="subcellular location">
    <subcellularLocation>
        <location evidence="1">Cytoplasm</location>
    </subcellularLocation>
</comment>
<protein>
    <recommendedName>
        <fullName>Tetratricopeptide repeat protein 12</fullName>
        <shortName>TPR repeat protein 12</shortName>
    </recommendedName>
</protein>
<sequence>MADDQERDLQRFLENVDEITSLIQEMNSDDPFIQQKAVLDSEKKLLLMEREQEEDGCRTTLNKTMISPPQTPENADEMSPDAFLASVEKDAKERAKRRRENRVLADALKEKGNEAFVRGDYETAIFFYSEGLGKLKDMKVLYTNRAQAFIKLGDYQKALVDCDWALKCDENCTKAYFHMGKAHVALKNYSKAKECYQKIEEINPKLKAQVKEHLNQVTLREKADLQEKEAQESLDSGKNTAVTTKNLLETLSKPGQTPLFYAGGIEILTEMMADCTERTLFRTYGGFSTISDHEVIRRCLFLTGKDAVEEVLCVSVLKLWQEVCVDNEENQRLLVTHPDMARLLPSFMTSRILVIQQQSLDLLLQLTQTENGRNQVIKHLDMTQLCEALLSFLAFSDKKANTAIGILTDLALEERFQVWFQTNLPDVLPALTGALNREPKITSPSALCQCIALLGNISAEPTARKHMIAHEEFGNACLDLLVKCEEDMDLFREITYTLLGLIMNLCLEITFLSEMWVVKMSRKCLSLLNSKDGGILTRAAGVLSRTLSSSQTIVEEALTAGVVKKMIKFLRMGGQTASRYAIKILAICTNSCHAAREEVVRLDKKFDLLMLLLASEDEILAGNAALCLGNCMEVPSAAPSLLKTDIVRVLLKLAGSDSKETGVQLNAGIALGKLCTAEPRFAAQLRELHGIQVLNSTMKHLNDS</sequence>
<proteinExistence type="evidence at protein level"/>
<keyword id="KW-0970">Cilium biogenesis/degradation</keyword>
<keyword id="KW-0963">Cytoplasm</keyword>
<keyword id="KW-0597">Phosphoprotein</keyword>
<keyword id="KW-1185">Reference proteome</keyword>
<keyword id="KW-0677">Repeat</keyword>
<keyword id="KW-0802">TPR repeat</keyword>
<dbReference type="EMBL" id="AK054350">
    <property type="protein sequence ID" value="BAC35744.1"/>
    <property type="molecule type" value="mRNA"/>
</dbReference>
<dbReference type="EMBL" id="BC056616">
    <property type="protein sequence ID" value="AAH56616.1"/>
    <property type="molecule type" value="mRNA"/>
</dbReference>
<dbReference type="CCDS" id="CCDS23163.1"/>
<dbReference type="RefSeq" id="NP_766358.1">
    <property type="nucleotide sequence ID" value="NM_172770.3"/>
</dbReference>
<dbReference type="SMR" id="Q8BW49"/>
<dbReference type="FunCoup" id="Q8BW49">
    <property type="interactions" value="212"/>
</dbReference>
<dbReference type="STRING" id="10090.ENSMUSP00000056378"/>
<dbReference type="GlyGen" id="Q8BW49">
    <property type="glycosylation" value="1 site, 1 O-linked glycan (1 site)"/>
</dbReference>
<dbReference type="iPTMnet" id="Q8BW49"/>
<dbReference type="PhosphoSitePlus" id="Q8BW49"/>
<dbReference type="SwissPalm" id="Q8BW49"/>
<dbReference type="PaxDb" id="10090-ENSMUSP00000056378"/>
<dbReference type="ProteomicsDB" id="298004"/>
<dbReference type="Antibodypedia" id="32178">
    <property type="antibodies" value="80 antibodies from 17 providers"/>
</dbReference>
<dbReference type="Ensembl" id="ENSMUST00000055096.5">
    <property type="protein sequence ID" value="ENSMUSP00000056378.5"/>
    <property type="gene ID" value="ENSMUSG00000040219.5"/>
</dbReference>
<dbReference type="GeneID" id="235330"/>
<dbReference type="KEGG" id="mmu:235330"/>
<dbReference type="UCSC" id="uc009pjc.1">
    <property type="organism name" value="mouse"/>
</dbReference>
<dbReference type="AGR" id="MGI:2444588"/>
<dbReference type="CTD" id="54970"/>
<dbReference type="MGI" id="MGI:2444588">
    <property type="gene designation" value="Ttc12"/>
</dbReference>
<dbReference type="VEuPathDB" id="HostDB:ENSMUSG00000040219"/>
<dbReference type="eggNOG" id="KOG0548">
    <property type="taxonomic scope" value="Eukaryota"/>
</dbReference>
<dbReference type="GeneTree" id="ENSGT00940000161758"/>
<dbReference type="HOGENOM" id="CLU_391258_0_0_1"/>
<dbReference type="InParanoid" id="Q8BW49"/>
<dbReference type="OMA" id="AVQQNCA"/>
<dbReference type="OrthoDB" id="629492at2759"/>
<dbReference type="PhylomeDB" id="Q8BW49"/>
<dbReference type="TreeFam" id="TF332406"/>
<dbReference type="BioGRID-ORCS" id="235330">
    <property type="hits" value="2 hits in 77 CRISPR screens"/>
</dbReference>
<dbReference type="PRO" id="PR:Q8BW49"/>
<dbReference type="Proteomes" id="UP000000589">
    <property type="component" value="Chromosome 9"/>
</dbReference>
<dbReference type="RNAct" id="Q8BW49">
    <property type="molecule type" value="protein"/>
</dbReference>
<dbReference type="Bgee" id="ENSMUSG00000040219">
    <property type="expression patterns" value="Expressed in spermatocyte and 104 other cell types or tissues"/>
</dbReference>
<dbReference type="GO" id="GO:0005813">
    <property type="term" value="C:centrosome"/>
    <property type="evidence" value="ECO:0000266"/>
    <property type="project" value="MGI"/>
</dbReference>
<dbReference type="GO" id="GO:0005737">
    <property type="term" value="C:cytoplasm"/>
    <property type="evidence" value="ECO:0000250"/>
    <property type="project" value="UniProtKB"/>
</dbReference>
<dbReference type="GO" id="GO:0005829">
    <property type="term" value="C:cytosol"/>
    <property type="evidence" value="ECO:0007669"/>
    <property type="project" value="Ensembl"/>
</dbReference>
<dbReference type="GO" id="GO:0031965">
    <property type="term" value="C:nuclear membrane"/>
    <property type="evidence" value="ECO:0007669"/>
    <property type="project" value="Ensembl"/>
</dbReference>
<dbReference type="GO" id="GO:0005886">
    <property type="term" value="C:plasma membrane"/>
    <property type="evidence" value="ECO:0007669"/>
    <property type="project" value="Ensembl"/>
</dbReference>
<dbReference type="GO" id="GO:0070286">
    <property type="term" value="P:axonemal dynein complex assembly"/>
    <property type="evidence" value="ECO:0000250"/>
    <property type="project" value="UniProtKB"/>
</dbReference>
<dbReference type="GO" id="GO:0007288">
    <property type="term" value="P:sperm axoneme assembly"/>
    <property type="evidence" value="ECO:0000250"/>
    <property type="project" value="UniProtKB"/>
</dbReference>
<dbReference type="FunFam" id="1.25.40.10:FF:000391">
    <property type="entry name" value="Tetratricopeptide repeat domain 12"/>
    <property type="match status" value="1"/>
</dbReference>
<dbReference type="Gene3D" id="1.25.10.10">
    <property type="entry name" value="Leucine-rich Repeat Variant"/>
    <property type="match status" value="2"/>
</dbReference>
<dbReference type="Gene3D" id="1.25.40.10">
    <property type="entry name" value="Tetratricopeptide repeat domain"/>
    <property type="match status" value="1"/>
</dbReference>
<dbReference type="InterPro" id="IPR011989">
    <property type="entry name" value="ARM-like"/>
</dbReference>
<dbReference type="InterPro" id="IPR016024">
    <property type="entry name" value="ARM-type_fold"/>
</dbReference>
<dbReference type="InterPro" id="IPR011990">
    <property type="entry name" value="TPR-like_helical_dom_sf"/>
</dbReference>
<dbReference type="InterPro" id="IPR013105">
    <property type="entry name" value="TPR_2"/>
</dbReference>
<dbReference type="InterPro" id="IPR019734">
    <property type="entry name" value="TPR_rpt"/>
</dbReference>
<dbReference type="InterPro" id="IPR043195">
    <property type="entry name" value="TTC12"/>
</dbReference>
<dbReference type="PANTHER" id="PTHR46540">
    <property type="entry name" value="TETRATRICOPEPTIDE REPEAT PROTEIN 12"/>
    <property type="match status" value="1"/>
</dbReference>
<dbReference type="PANTHER" id="PTHR46540:SF1">
    <property type="entry name" value="TETRATRICOPEPTIDE REPEAT PROTEIN 12"/>
    <property type="match status" value="1"/>
</dbReference>
<dbReference type="Pfam" id="PF00515">
    <property type="entry name" value="TPR_1"/>
    <property type="match status" value="1"/>
</dbReference>
<dbReference type="Pfam" id="PF07719">
    <property type="entry name" value="TPR_2"/>
    <property type="match status" value="1"/>
</dbReference>
<dbReference type="SMART" id="SM00028">
    <property type="entry name" value="TPR"/>
    <property type="match status" value="3"/>
</dbReference>
<dbReference type="SUPFAM" id="SSF48371">
    <property type="entry name" value="ARM repeat"/>
    <property type="match status" value="1"/>
</dbReference>
<dbReference type="SUPFAM" id="SSF48452">
    <property type="entry name" value="TPR-like"/>
    <property type="match status" value="1"/>
</dbReference>
<dbReference type="PROSITE" id="PS50005">
    <property type="entry name" value="TPR"/>
    <property type="match status" value="3"/>
</dbReference>
<dbReference type="PROSITE" id="PS50293">
    <property type="entry name" value="TPR_REGION"/>
    <property type="match status" value="1"/>
</dbReference>
<reference key="1">
    <citation type="journal article" date="2005" name="Science">
        <title>The transcriptional landscape of the mammalian genome.</title>
        <authorList>
            <person name="Carninci P."/>
            <person name="Kasukawa T."/>
            <person name="Katayama S."/>
            <person name="Gough J."/>
            <person name="Frith M.C."/>
            <person name="Maeda N."/>
            <person name="Oyama R."/>
            <person name="Ravasi T."/>
            <person name="Lenhard B."/>
            <person name="Wells C."/>
            <person name="Kodzius R."/>
            <person name="Shimokawa K."/>
            <person name="Bajic V.B."/>
            <person name="Brenner S.E."/>
            <person name="Batalov S."/>
            <person name="Forrest A.R."/>
            <person name="Zavolan M."/>
            <person name="Davis M.J."/>
            <person name="Wilming L.G."/>
            <person name="Aidinis V."/>
            <person name="Allen J.E."/>
            <person name="Ambesi-Impiombato A."/>
            <person name="Apweiler R."/>
            <person name="Aturaliya R.N."/>
            <person name="Bailey T.L."/>
            <person name="Bansal M."/>
            <person name="Baxter L."/>
            <person name="Beisel K.W."/>
            <person name="Bersano T."/>
            <person name="Bono H."/>
            <person name="Chalk A.M."/>
            <person name="Chiu K.P."/>
            <person name="Choudhary V."/>
            <person name="Christoffels A."/>
            <person name="Clutterbuck D.R."/>
            <person name="Crowe M.L."/>
            <person name="Dalla E."/>
            <person name="Dalrymple B.P."/>
            <person name="de Bono B."/>
            <person name="Della Gatta G."/>
            <person name="di Bernardo D."/>
            <person name="Down T."/>
            <person name="Engstrom P."/>
            <person name="Fagiolini M."/>
            <person name="Faulkner G."/>
            <person name="Fletcher C.F."/>
            <person name="Fukushima T."/>
            <person name="Furuno M."/>
            <person name="Futaki S."/>
            <person name="Gariboldi M."/>
            <person name="Georgii-Hemming P."/>
            <person name="Gingeras T.R."/>
            <person name="Gojobori T."/>
            <person name="Green R.E."/>
            <person name="Gustincich S."/>
            <person name="Harbers M."/>
            <person name="Hayashi Y."/>
            <person name="Hensch T.K."/>
            <person name="Hirokawa N."/>
            <person name="Hill D."/>
            <person name="Huminiecki L."/>
            <person name="Iacono M."/>
            <person name="Ikeo K."/>
            <person name="Iwama A."/>
            <person name="Ishikawa T."/>
            <person name="Jakt M."/>
            <person name="Kanapin A."/>
            <person name="Katoh M."/>
            <person name="Kawasawa Y."/>
            <person name="Kelso J."/>
            <person name="Kitamura H."/>
            <person name="Kitano H."/>
            <person name="Kollias G."/>
            <person name="Krishnan S.P."/>
            <person name="Kruger A."/>
            <person name="Kummerfeld S.K."/>
            <person name="Kurochkin I.V."/>
            <person name="Lareau L.F."/>
            <person name="Lazarevic D."/>
            <person name="Lipovich L."/>
            <person name="Liu J."/>
            <person name="Liuni S."/>
            <person name="McWilliam S."/>
            <person name="Madan Babu M."/>
            <person name="Madera M."/>
            <person name="Marchionni L."/>
            <person name="Matsuda H."/>
            <person name="Matsuzawa S."/>
            <person name="Miki H."/>
            <person name="Mignone F."/>
            <person name="Miyake S."/>
            <person name="Morris K."/>
            <person name="Mottagui-Tabar S."/>
            <person name="Mulder N."/>
            <person name="Nakano N."/>
            <person name="Nakauchi H."/>
            <person name="Ng P."/>
            <person name="Nilsson R."/>
            <person name="Nishiguchi S."/>
            <person name="Nishikawa S."/>
            <person name="Nori F."/>
            <person name="Ohara O."/>
            <person name="Okazaki Y."/>
            <person name="Orlando V."/>
            <person name="Pang K.C."/>
            <person name="Pavan W.J."/>
            <person name="Pavesi G."/>
            <person name="Pesole G."/>
            <person name="Petrovsky N."/>
            <person name="Piazza S."/>
            <person name="Reed J."/>
            <person name="Reid J.F."/>
            <person name="Ring B.Z."/>
            <person name="Ringwald M."/>
            <person name="Rost B."/>
            <person name="Ruan Y."/>
            <person name="Salzberg S.L."/>
            <person name="Sandelin A."/>
            <person name="Schneider C."/>
            <person name="Schoenbach C."/>
            <person name="Sekiguchi K."/>
            <person name="Semple C.A."/>
            <person name="Seno S."/>
            <person name="Sessa L."/>
            <person name="Sheng Y."/>
            <person name="Shibata Y."/>
            <person name="Shimada H."/>
            <person name="Shimada K."/>
            <person name="Silva D."/>
            <person name="Sinclair B."/>
            <person name="Sperling S."/>
            <person name="Stupka E."/>
            <person name="Sugiura K."/>
            <person name="Sultana R."/>
            <person name="Takenaka Y."/>
            <person name="Taki K."/>
            <person name="Tammoja K."/>
            <person name="Tan S.L."/>
            <person name="Tang S."/>
            <person name="Taylor M.S."/>
            <person name="Tegner J."/>
            <person name="Teichmann S.A."/>
            <person name="Ueda H.R."/>
            <person name="van Nimwegen E."/>
            <person name="Verardo R."/>
            <person name="Wei C.L."/>
            <person name="Yagi K."/>
            <person name="Yamanishi H."/>
            <person name="Zabarovsky E."/>
            <person name="Zhu S."/>
            <person name="Zimmer A."/>
            <person name="Hide W."/>
            <person name="Bult C."/>
            <person name="Grimmond S.M."/>
            <person name="Teasdale R.D."/>
            <person name="Liu E.T."/>
            <person name="Brusic V."/>
            <person name="Quackenbush J."/>
            <person name="Wahlestedt C."/>
            <person name="Mattick J.S."/>
            <person name="Hume D.A."/>
            <person name="Kai C."/>
            <person name="Sasaki D."/>
            <person name="Tomaru Y."/>
            <person name="Fukuda S."/>
            <person name="Kanamori-Katayama M."/>
            <person name="Suzuki M."/>
            <person name="Aoki J."/>
            <person name="Arakawa T."/>
            <person name="Iida J."/>
            <person name="Imamura K."/>
            <person name="Itoh M."/>
            <person name="Kato T."/>
            <person name="Kawaji H."/>
            <person name="Kawagashira N."/>
            <person name="Kawashima T."/>
            <person name="Kojima M."/>
            <person name="Kondo S."/>
            <person name="Konno H."/>
            <person name="Nakano K."/>
            <person name="Ninomiya N."/>
            <person name="Nishio T."/>
            <person name="Okada M."/>
            <person name="Plessy C."/>
            <person name="Shibata K."/>
            <person name="Shiraki T."/>
            <person name="Suzuki S."/>
            <person name="Tagami M."/>
            <person name="Waki K."/>
            <person name="Watahiki A."/>
            <person name="Okamura-Oho Y."/>
            <person name="Suzuki H."/>
            <person name="Kawai J."/>
            <person name="Hayashizaki Y."/>
        </authorList>
    </citation>
    <scope>NUCLEOTIDE SEQUENCE [LARGE SCALE MRNA]</scope>
    <source>
        <strain>C57BL/6J</strain>
        <tissue>Ovary</tissue>
    </source>
</reference>
<reference key="2">
    <citation type="journal article" date="2004" name="Genome Res.">
        <title>The status, quality, and expansion of the NIH full-length cDNA project: the Mammalian Gene Collection (MGC).</title>
        <authorList>
            <consortium name="The MGC Project Team"/>
        </authorList>
    </citation>
    <scope>NUCLEOTIDE SEQUENCE [LARGE SCALE MRNA]</scope>
    <source>
        <strain>FVB/N</strain>
        <tissue>Kidney</tissue>
    </source>
</reference>
<reference key="3">
    <citation type="journal article" date="2010" name="Cell">
        <title>A tissue-specific atlas of mouse protein phosphorylation and expression.</title>
        <authorList>
            <person name="Huttlin E.L."/>
            <person name="Jedrychowski M.P."/>
            <person name="Elias J.E."/>
            <person name="Goswami T."/>
            <person name="Rad R."/>
            <person name="Beausoleil S.A."/>
            <person name="Villen J."/>
            <person name="Haas W."/>
            <person name="Sowa M.E."/>
            <person name="Gygi S.P."/>
        </authorList>
    </citation>
    <scope>PHOSPHORYLATION [LARGE SCALE ANALYSIS] AT THR-71</scope>
    <scope>IDENTIFICATION BY MASS SPECTROMETRY [LARGE SCALE ANALYSIS]</scope>
    <source>
        <tissue>Testis</tissue>
    </source>
</reference>